<evidence type="ECO:0000255" key="1">
    <source>
        <dbReference type="HAMAP-Rule" id="MF_00432"/>
    </source>
</evidence>
<sequence>MIEVFLFGIVLGLIPITLAGLFVTAYLQYRRGDQLDL</sequence>
<dbReference type="EMBL" id="EF044213">
    <property type="protein sequence ID" value="ABJ89698.1"/>
    <property type="molecule type" value="Genomic_DNA"/>
</dbReference>
<dbReference type="RefSeq" id="YP_817501.1">
    <property type="nucleotide sequence ID" value="NC_008535.1"/>
</dbReference>
<dbReference type="SMR" id="A0A354"/>
<dbReference type="GeneID" id="4421782"/>
<dbReference type="OrthoDB" id="35473at2759"/>
<dbReference type="Proteomes" id="UP000515148">
    <property type="component" value="Chloroplast Pltd"/>
</dbReference>
<dbReference type="GO" id="GO:0009535">
    <property type="term" value="C:chloroplast thylakoid membrane"/>
    <property type="evidence" value="ECO:0007669"/>
    <property type="project" value="UniProtKB-SubCell"/>
</dbReference>
<dbReference type="GO" id="GO:0009512">
    <property type="term" value="C:cytochrome b6f complex"/>
    <property type="evidence" value="ECO:0007669"/>
    <property type="project" value="InterPro"/>
</dbReference>
<dbReference type="GO" id="GO:0045158">
    <property type="term" value="F:electron transporter, transferring electrons within cytochrome b6/f complex of photosystem II activity"/>
    <property type="evidence" value="ECO:0007669"/>
    <property type="project" value="UniProtKB-UniRule"/>
</dbReference>
<dbReference type="GO" id="GO:0017004">
    <property type="term" value="P:cytochrome complex assembly"/>
    <property type="evidence" value="ECO:0007669"/>
    <property type="project" value="UniProtKB-UniRule"/>
</dbReference>
<dbReference type="GO" id="GO:0015979">
    <property type="term" value="P:photosynthesis"/>
    <property type="evidence" value="ECO:0007669"/>
    <property type="project" value="UniProtKB-KW"/>
</dbReference>
<dbReference type="HAMAP" id="MF_00432">
    <property type="entry name" value="Cytb6_f_PetG"/>
    <property type="match status" value="1"/>
</dbReference>
<dbReference type="InterPro" id="IPR003683">
    <property type="entry name" value="Cyt_6/f_cplx_su5"/>
</dbReference>
<dbReference type="InterPro" id="IPR036099">
    <property type="entry name" value="Cyt_6/f_cplx_su5_sf"/>
</dbReference>
<dbReference type="NCBIfam" id="NF001907">
    <property type="entry name" value="PRK00665.1"/>
    <property type="match status" value="1"/>
</dbReference>
<dbReference type="Pfam" id="PF02529">
    <property type="entry name" value="PetG"/>
    <property type="match status" value="1"/>
</dbReference>
<dbReference type="PIRSF" id="PIRSF000034">
    <property type="entry name" value="Cyt_b6-f_V"/>
    <property type="match status" value="1"/>
</dbReference>
<dbReference type="SUPFAM" id="SSF103446">
    <property type="entry name" value="PetG subunit of the cytochrome b6f complex"/>
    <property type="match status" value="1"/>
</dbReference>
<proteinExistence type="inferred from homology"/>
<protein>
    <recommendedName>
        <fullName evidence="1">Cytochrome b6-f complex subunit 5</fullName>
    </recommendedName>
    <alternativeName>
        <fullName evidence="1">Cytochrome b6-f complex subunit PetG</fullName>
    </alternativeName>
    <alternativeName>
        <fullName evidence="1">Cytochrome b6-f complex subunit V</fullName>
    </alternativeName>
</protein>
<comment type="function">
    <text evidence="1">Component of the cytochrome b6-f complex, which mediates electron transfer between photosystem II (PSII) and photosystem I (PSI), cyclic electron flow around PSI, and state transitions. PetG is required for either the stability or assembly of the cytochrome b6-f complex.</text>
</comment>
<comment type="subunit">
    <text evidence="1">The 4 large subunits of the cytochrome b6-f complex are cytochrome b6, subunit IV (17 kDa polypeptide, PetD), cytochrome f and the Rieske protein, while the 4 small subunits are PetG, PetL, PetM and PetN. The complex functions as a dimer.</text>
</comment>
<comment type="subcellular location">
    <subcellularLocation>
        <location evidence="1">Plastid</location>
        <location evidence="1">Chloroplast thylakoid membrane</location>
        <topology evidence="1">Single-pass membrane protein</topology>
    </subcellularLocation>
</comment>
<comment type="similarity">
    <text evidence="1">Belongs to the PetG family.</text>
</comment>
<geneLocation type="chloroplast"/>
<accession>A0A354</accession>
<keyword id="KW-0150">Chloroplast</keyword>
<keyword id="KW-0249">Electron transport</keyword>
<keyword id="KW-0472">Membrane</keyword>
<keyword id="KW-0602">Photosynthesis</keyword>
<keyword id="KW-0934">Plastid</keyword>
<keyword id="KW-1185">Reference proteome</keyword>
<keyword id="KW-0793">Thylakoid</keyword>
<keyword id="KW-0812">Transmembrane</keyword>
<keyword id="KW-1133">Transmembrane helix</keyword>
<keyword id="KW-0813">Transport</keyword>
<name>PETG_COFAR</name>
<feature type="chain" id="PRO_0000275484" description="Cytochrome b6-f complex subunit 5">
    <location>
        <begin position="1"/>
        <end position="37"/>
    </location>
</feature>
<feature type="transmembrane region" description="Helical" evidence="1">
    <location>
        <begin position="5"/>
        <end position="25"/>
    </location>
</feature>
<gene>
    <name evidence="1" type="primary">petG</name>
</gene>
<organism>
    <name type="scientific">Coffea arabica</name>
    <name type="common">Arabian coffee</name>
    <dbReference type="NCBI Taxonomy" id="13443"/>
    <lineage>
        <taxon>Eukaryota</taxon>
        <taxon>Viridiplantae</taxon>
        <taxon>Streptophyta</taxon>
        <taxon>Embryophyta</taxon>
        <taxon>Tracheophyta</taxon>
        <taxon>Spermatophyta</taxon>
        <taxon>Magnoliopsida</taxon>
        <taxon>eudicotyledons</taxon>
        <taxon>Gunneridae</taxon>
        <taxon>Pentapetalae</taxon>
        <taxon>asterids</taxon>
        <taxon>lamiids</taxon>
        <taxon>Gentianales</taxon>
        <taxon>Rubiaceae</taxon>
        <taxon>Ixoroideae</taxon>
        <taxon>Gardenieae complex</taxon>
        <taxon>Bertiereae - Coffeeae clade</taxon>
        <taxon>Coffeeae</taxon>
        <taxon>Coffea</taxon>
    </lineage>
</organism>
<reference key="1">
    <citation type="journal article" date="2007" name="Plant Biotechnol. J.">
        <title>The complete nucleotide sequence of the coffee (Coffea arabica L.) chloroplast genome: organization and implications for biotechnology and phylogenetic relationships amongst angiosperms.</title>
        <authorList>
            <person name="Samson N."/>
            <person name="Bausher M.G."/>
            <person name="Lee S.-B."/>
            <person name="Jansen R.K."/>
            <person name="Daniell H."/>
        </authorList>
    </citation>
    <scope>NUCLEOTIDE SEQUENCE [LARGE SCALE GENOMIC DNA]</scope>
</reference>